<proteinExistence type="evidence at transcript level"/>
<dbReference type="EMBL" id="AC026875">
    <property type="protein sequence ID" value="AAF79838.1"/>
    <property type="molecule type" value="Genomic_DNA"/>
</dbReference>
<dbReference type="EMBL" id="CP002684">
    <property type="protein sequence ID" value="AEE28239.1"/>
    <property type="molecule type" value="Genomic_DNA"/>
</dbReference>
<dbReference type="RefSeq" id="NP_172286.1">
    <property type="nucleotide sequence ID" value="NM_100682.3"/>
</dbReference>
<dbReference type="SMR" id="Q9LN01"/>
<dbReference type="BioGRID" id="22566">
    <property type="interactions" value="2"/>
</dbReference>
<dbReference type="FunCoup" id="Q9LN01">
    <property type="interactions" value="20"/>
</dbReference>
<dbReference type="STRING" id="3702.Q9LN01"/>
<dbReference type="PaxDb" id="3702-AT1G08070.1"/>
<dbReference type="EnsemblPlants" id="AT1G08070.1">
    <property type="protein sequence ID" value="AT1G08070.1"/>
    <property type="gene ID" value="AT1G08070"/>
</dbReference>
<dbReference type="GeneID" id="837325"/>
<dbReference type="Gramene" id="AT1G08070.1">
    <property type="protein sequence ID" value="AT1G08070.1"/>
    <property type="gene ID" value="AT1G08070"/>
</dbReference>
<dbReference type="KEGG" id="ath:AT1G08070"/>
<dbReference type="Araport" id="AT1G08070"/>
<dbReference type="TAIR" id="AT1G08070">
    <property type="gene designation" value="OTP82"/>
</dbReference>
<dbReference type="eggNOG" id="KOG4197">
    <property type="taxonomic scope" value="Eukaryota"/>
</dbReference>
<dbReference type="HOGENOM" id="CLU_002706_37_2_1"/>
<dbReference type="InParanoid" id="Q9LN01"/>
<dbReference type="PhylomeDB" id="Q9LN01"/>
<dbReference type="PRO" id="PR:Q9LN01"/>
<dbReference type="Proteomes" id="UP000006548">
    <property type="component" value="Chromosome 1"/>
</dbReference>
<dbReference type="ExpressionAtlas" id="Q9LN01">
    <property type="expression patterns" value="baseline and differential"/>
</dbReference>
<dbReference type="GO" id="GO:0009507">
    <property type="term" value="C:chloroplast"/>
    <property type="evidence" value="ECO:0007669"/>
    <property type="project" value="UniProtKB-SubCell"/>
</dbReference>
<dbReference type="GO" id="GO:0003723">
    <property type="term" value="F:RNA binding"/>
    <property type="evidence" value="ECO:0007669"/>
    <property type="project" value="InterPro"/>
</dbReference>
<dbReference type="GO" id="GO:0008270">
    <property type="term" value="F:zinc ion binding"/>
    <property type="evidence" value="ECO:0007669"/>
    <property type="project" value="InterPro"/>
</dbReference>
<dbReference type="GO" id="GO:0031425">
    <property type="term" value="P:chloroplast RNA processing"/>
    <property type="evidence" value="ECO:0000315"/>
    <property type="project" value="TAIR"/>
</dbReference>
<dbReference type="GO" id="GO:0006397">
    <property type="term" value="P:mRNA processing"/>
    <property type="evidence" value="ECO:0007669"/>
    <property type="project" value="UniProtKB-KW"/>
</dbReference>
<dbReference type="GO" id="GO:0009451">
    <property type="term" value="P:RNA modification"/>
    <property type="evidence" value="ECO:0007669"/>
    <property type="project" value="InterPro"/>
</dbReference>
<dbReference type="FunFam" id="1.25.40.10:FF:000333">
    <property type="entry name" value="Pentatricopeptide repeat-containing protein"/>
    <property type="match status" value="1"/>
</dbReference>
<dbReference type="FunFam" id="1.25.40.10:FF:001050">
    <property type="entry name" value="Pentatricopeptide repeat-containing protein At2g33760"/>
    <property type="match status" value="1"/>
</dbReference>
<dbReference type="FunFam" id="1.25.40.10:FF:000417">
    <property type="entry name" value="Pentatricopeptide repeat-containing protein At4g38010"/>
    <property type="match status" value="1"/>
</dbReference>
<dbReference type="FunFam" id="1.25.40.10:FF:000470">
    <property type="entry name" value="Pentatricopeptide repeat-containing protein At5g66520"/>
    <property type="match status" value="1"/>
</dbReference>
<dbReference type="FunFam" id="1.25.40.10:FF:000231">
    <property type="entry name" value="Pentatricopeptide repeat-containing protein chloroplastic"/>
    <property type="match status" value="1"/>
</dbReference>
<dbReference type="Gene3D" id="1.25.40.10">
    <property type="entry name" value="Tetratricopeptide repeat domain"/>
    <property type="match status" value="4"/>
</dbReference>
<dbReference type="InterPro" id="IPR032867">
    <property type="entry name" value="DYW_dom"/>
</dbReference>
<dbReference type="InterPro" id="IPR046848">
    <property type="entry name" value="E_motif"/>
</dbReference>
<dbReference type="InterPro" id="IPR002885">
    <property type="entry name" value="Pentatricopeptide_rpt"/>
</dbReference>
<dbReference type="InterPro" id="IPR046960">
    <property type="entry name" value="PPR_At4g14850-like_plant"/>
</dbReference>
<dbReference type="InterPro" id="IPR011990">
    <property type="entry name" value="TPR-like_helical_dom_sf"/>
</dbReference>
<dbReference type="NCBIfam" id="TIGR00756">
    <property type="entry name" value="PPR"/>
    <property type="match status" value="4"/>
</dbReference>
<dbReference type="PANTHER" id="PTHR47926">
    <property type="entry name" value="PENTATRICOPEPTIDE REPEAT-CONTAINING PROTEIN"/>
    <property type="match status" value="1"/>
</dbReference>
<dbReference type="PANTHER" id="PTHR47926:SF436">
    <property type="entry name" value="PENTATRICOPEPTIDE REPEAT-CONTAINING PROTEIN ELI1, CHLOROPLASTIC-LIKE ISOFORM X2"/>
    <property type="match status" value="1"/>
</dbReference>
<dbReference type="Pfam" id="PF14432">
    <property type="entry name" value="DYW_deaminase"/>
    <property type="match status" value="1"/>
</dbReference>
<dbReference type="Pfam" id="PF20431">
    <property type="entry name" value="E_motif"/>
    <property type="match status" value="1"/>
</dbReference>
<dbReference type="Pfam" id="PF01535">
    <property type="entry name" value="PPR"/>
    <property type="match status" value="5"/>
</dbReference>
<dbReference type="Pfam" id="PF12854">
    <property type="entry name" value="PPR_1"/>
    <property type="match status" value="1"/>
</dbReference>
<dbReference type="Pfam" id="PF13041">
    <property type="entry name" value="PPR_2"/>
    <property type="match status" value="3"/>
</dbReference>
<dbReference type="SUPFAM" id="SSF48452">
    <property type="entry name" value="TPR-like"/>
    <property type="match status" value="1"/>
</dbReference>
<dbReference type="PROSITE" id="PS51375">
    <property type="entry name" value="PPR"/>
    <property type="match status" value="14"/>
</dbReference>
<comment type="function">
    <text evidence="1">Involved in multiple sites RNA editing events in chloroplasts. Involved in the editing of the site 9 of ndhB (ndhB-9) and site 1 of ndhG (ndhG-1) transcripts, which are two plastid-encoded subunits of the chloroplast NAD(P)H dehydrogenase (NDH) complex. Not essential for the activity of the NDH complex of the photosynthetic electron transport chain.</text>
</comment>
<comment type="subunit">
    <text evidence="2 3">Interacts with ORRM1 (PubMed:23487777). Interacts with VAR3/OZ1 (PubMed:25768119).</text>
</comment>
<comment type="subcellular location">
    <subcellularLocation>
        <location evidence="1">Plastid</location>
        <location evidence="1">Chloroplast</location>
    </subcellularLocation>
</comment>
<comment type="disruption phenotype">
    <text evidence="1">No visible phenotype under normal growth conditions.</text>
</comment>
<comment type="miscellaneous">
    <text evidence="1">The DYW motif is dispensable for editing activity in vivo.</text>
</comment>
<comment type="similarity">
    <text evidence="5">Belongs to the PPR family. PCMP-H subfamily.</text>
</comment>
<comment type="online information" name="Pentatricopeptide repeat proteins">
    <link uri="https://ppr.plantenergy.uwa.edu.au"/>
</comment>
<accession>Q9LN01</accession>
<keyword id="KW-0150">Chloroplast</keyword>
<keyword id="KW-0507">mRNA processing</keyword>
<keyword id="KW-0934">Plastid</keyword>
<keyword id="KW-1185">Reference proteome</keyword>
<keyword id="KW-0677">Repeat</keyword>
<keyword id="KW-0809">Transit peptide</keyword>
<sequence>MMLSCSPLTVPSSSYPFHFLPSSSDPPYDSIRNHPSLSLLHNCKTLQSLRIIHAQMIKIGLHNTNYALSKLIEFCILSPHFEGLPYAISVFKTIQEPNLLIWNTMFRGHALSSDPVSALKLYVCMISLGLLPNSYTFPFVLKSCAKSKAFKEGQQIHGHVLKLGCDLDLYVHTSLISMYVQNGRLEDAHKVFDKSPHRDVVSYTALIKGYASRGYIENAQKLFDEIPVKDVVSWNAMISGYAETGNYKEALELFKDMMKTNVRPDESTMVTVVSACAQSGSIELGRQVHLWIDDHGFGSNLKIVNALIDLYSKCGELETACGLFERLPYKDVISWNTLIGGYTHMNLYKEALLLFQEMLRSGETPNDVTMLSILPACAHLGAIDIGRWIHVYIDKRLKGVTNASSLRTSLIDMYAKCGDIEAAHQVFNSILHKSLSSWNAMIFGFAMHGRADASFDLFSRMRKIGIQPDDITFVGLLSACSHSGMLDLGRHIFRTMTQDYKMTPKLEHYGCMIDLLGHSGLFKEAEEMINMMEMEPDGVIWCSLLKACKMHGNVELGESFAENLIKIEPENPGSYVLLSNIYASAGRWNEVAKTRALLNDKGMKKVPGCSSIEIDSVVHEFIIGDKFHPRNREIYGMLEEMEVLLEKAGFVPDTSEVLQEMEEEWKEGALRHHSEKLAIAFGLISTKPGTKLTIVKNLRVCRNCHEATKLISKIYKREIIARDRTRFHHFRDGVCSCNDYW</sequence>
<organism>
    <name type="scientific">Arabidopsis thaliana</name>
    <name type="common">Mouse-ear cress</name>
    <dbReference type="NCBI Taxonomy" id="3702"/>
    <lineage>
        <taxon>Eukaryota</taxon>
        <taxon>Viridiplantae</taxon>
        <taxon>Streptophyta</taxon>
        <taxon>Embryophyta</taxon>
        <taxon>Tracheophyta</taxon>
        <taxon>Spermatophyta</taxon>
        <taxon>Magnoliopsida</taxon>
        <taxon>eudicotyledons</taxon>
        <taxon>Gunneridae</taxon>
        <taxon>Pentapetalae</taxon>
        <taxon>rosids</taxon>
        <taxon>malvids</taxon>
        <taxon>Brassicales</taxon>
        <taxon>Brassicaceae</taxon>
        <taxon>Camelineae</taxon>
        <taxon>Arabidopsis</taxon>
    </lineage>
</organism>
<feature type="transit peptide" description="Chloroplast" evidence="5">
    <location>
        <begin position="1"/>
        <end status="unknown"/>
    </location>
</feature>
<feature type="chain" id="PRO_0000342762" description="Pentatricopeptide repeat-containing protein At1g08070, chloroplastic">
    <location>
        <begin status="unknown"/>
        <end position="741"/>
    </location>
</feature>
<feature type="repeat" description="PPR 1">
    <location>
        <begin position="98"/>
        <end position="132"/>
    </location>
</feature>
<feature type="repeat" description="PPR 2">
    <location>
        <begin position="133"/>
        <end position="167"/>
    </location>
</feature>
<feature type="repeat" description="PPR 3">
    <location>
        <begin position="168"/>
        <end position="202"/>
    </location>
</feature>
<feature type="repeat" description="PPR 4">
    <location>
        <begin position="203"/>
        <end position="229"/>
    </location>
</feature>
<feature type="repeat" description="PPR 5">
    <location>
        <begin position="230"/>
        <end position="264"/>
    </location>
</feature>
<feature type="repeat" description="PPR 6">
    <location>
        <begin position="265"/>
        <end position="299"/>
    </location>
</feature>
<feature type="repeat" description="PPR 7">
    <location>
        <begin position="300"/>
        <end position="330"/>
    </location>
</feature>
<feature type="repeat" description="PPR 8">
    <location>
        <begin position="331"/>
        <end position="365"/>
    </location>
</feature>
<feature type="repeat" description="PPR 9">
    <location>
        <begin position="366"/>
        <end position="396"/>
    </location>
</feature>
<feature type="repeat" description="PPR 10">
    <location>
        <begin position="403"/>
        <end position="433"/>
    </location>
</feature>
<feature type="repeat" description="PPR 11">
    <location>
        <begin position="434"/>
        <end position="468"/>
    </location>
</feature>
<feature type="repeat" description="PPR 12">
    <location>
        <begin position="469"/>
        <end position="499"/>
    </location>
</feature>
<feature type="repeat" description="PPR 13">
    <location>
        <begin position="505"/>
        <end position="535"/>
    </location>
</feature>
<feature type="region of interest" description="Type E motif">
    <location>
        <begin position="540"/>
        <end position="615"/>
    </location>
</feature>
<feature type="region of interest" description="Type E(+) motif">
    <location>
        <begin position="616"/>
        <end position="646"/>
    </location>
</feature>
<feature type="region of interest" description="Type DYW motif">
    <location>
        <begin position="647"/>
        <end position="741"/>
    </location>
</feature>
<reference key="1">
    <citation type="journal article" date="2000" name="Nature">
        <title>Sequence and analysis of chromosome 1 of the plant Arabidopsis thaliana.</title>
        <authorList>
            <person name="Theologis A."/>
            <person name="Ecker J.R."/>
            <person name="Palm C.J."/>
            <person name="Federspiel N.A."/>
            <person name="Kaul S."/>
            <person name="White O."/>
            <person name="Alonso J."/>
            <person name="Altafi H."/>
            <person name="Araujo R."/>
            <person name="Bowman C.L."/>
            <person name="Brooks S.Y."/>
            <person name="Buehler E."/>
            <person name="Chan A."/>
            <person name="Chao Q."/>
            <person name="Chen H."/>
            <person name="Cheuk R.F."/>
            <person name="Chin C.W."/>
            <person name="Chung M.K."/>
            <person name="Conn L."/>
            <person name="Conway A.B."/>
            <person name="Conway A.R."/>
            <person name="Creasy T.H."/>
            <person name="Dewar K."/>
            <person name="Dunn P."/>
            <person name="Etgu P."/>
            <person name="Feldblyum T.V."/>
            <person name="Feng J.-D."/>
            <person name="Fong B."/>
            <person name="Fujii C.Y."/>
            <person name="Gill J.E."/>
            <person name="Goldsmith A.D."/>
            <person name="Haas B."/>
            <person name="Hansen N.F."/>
            <person name="Hughes B."/>
            <person name="Huizar L."/>
            <person name="Hunter J.L."/>
            <person name="Jenkins J."/>
            <person name="Johnson-Hopson C."/>
            <person name="Khan S."/>
            <person name="Khaykin E."/>
            <person name="Kim C.J."/>
            <person name="Koo H.L."/>
            <person name="Kremenetskaia I."/>
            <person name="Kurtz D.B."/>
            <person name="Kwan A."/>
            <person name="Lam B."/>
            <person name="Langin-Hooper S."/>
            <person name="Lee A."/>
            <person name="Lee J.M."/>
            <person name="Lenz C.A."/>
            <person name="Li J.H."/>
            <person name="Li Y.-P."/>
            <person name="Lin X."/>
            <person name="Liu S.X."/>
            <person name="Liu Z.A."/>
            <person name="Luros J.S."/>
            <person name="Maiti R."/>
            <person name="Marziali A."/>
            <person name="Militscher J."/>
            <person name="Miranda M."/>
            <person name="Nguyen M."/>
            <person name="Nierman W.C."/>
            <person name="Osborne B.I."/>
            <person name="Pai G."/>
            <person name="Peterson J."/>
            <person name="Pham P.K."/>
            <person name="Rizzo M."/>
            <person name="Rooney T."/>
            <person name="Rowley D."/>
            <person name="Sakano H."/>
            <person name="Salzberg S.L."/>
            <person name="Schwartz J.R."/>
            <person name="Shinn P."/>
            <person name="Southwick A.M."/>
            <person name="Sun H."/>
            <person name="Tallon L.J."/>
            <person name="Tambunga G."/>
            <person name="Toriumi M.J."/>
            <person name="Town C.D."/>
            <person name="Utterback T."/>
            <person name="Van Aken S."/>
            <person name="Vaysberg M."/>
            <person name="Vysotskaia V.S."/>
            <person name="Walker M."/>
            <person name="Wu D."/>
            <person name="Yu G."/>
            <person name="Fraser C.M."/>
            <person name="Venter J.C."/>
            <person name="Davis R.W."/>
        </authorList>
    </citation>
    <scope>NUCLEOTIDE SEQUENCE [LARGE SCALE GENOMIC DNA]</scope>
    <source>
        <strain>cv. Columbia</strain>
    </source>
</reference>
<reference key="2">
    <citation type="journal article" date="2017" name="Plant J.">
        <title>Araport11: a complete reannotation of the Arabidopsis thaliana reference genome.</title>
        <authorList>
            <person name="Cheng C.Y."/>
            <person name="Krishnakumar V."/>
            <person name="Chan A.P."/>
            <person name="Thibaud-Nissen F."/>
            <person name="Schobel S."/>
            <person name="Town C.D."/>
        </authorList>
    </citation>
    <scope>GENOME REANNOTATION</scope>
    <source>
        <strain>cv. Columbia</strain>
    </source>
</reference>
<reference key="3">
    <citation type="journal article" date="2000" name="Plant Mol. Biol.">
        <title>In Arabidopsis thaliana, 1% of the genome codes for a novel protein family unique to plants.</title>
        <authorList>
            <person name="Aubourg S."/>
            <person name="Boudet N."/>
            <person name="Kreis M."/>
            <person name="Lecharny A."/>
        </authorList>
    </citation>
    <scope>GENE FAMILY</scope>
</reference>
<reference key="4">
    <citation type="journal article" date="2004" name="Plant Cell">
        <title>Genome-wide analysis of Arabidopsis pentatricopeptide repeat proteins reveals their essential role in organelle biogenesis.</title>
        <authorList>
            <person name="Lurin C."/>
            <person name="Andres C."/>
            <person name="Aubourg S."/>
            <person name="Bellaoui M."/>
            <person name="Bitton F."/>
            <person name="Bruyere C."/>
            <person name="Caboche M."/>
            <person name="Debast C."/>
            <person name="Gualberto J."/>
            <person name="Hoffmann B."/>
            <person name="Lecharny A."/>
            <person name="Le Ret M."/>
            <person name="Martin-Magniette M.-L."/>
            <person name="Mireau H."/>
            <person name="Peeters N."/>
            <person name="Renou J.-P."/>
            <person name="Szurek B."/>
            <person name="Taconnat L."/>
            <person name="Small I."/>
        </authorList>
    </citation>
    <scope>GENE FAMILY</scope>
</reference>
<reference key="5">
    <citation type="journal article" date="2010" name="Plant J.">
        <title>The pentatricopeptide repeat protein OTP82 is required for RNA editing of plastid ndhB and ndhG transcripts.</title>
        <authorList>
            <person name="Okuda K."/>
            <person name="Hammani K."/>
            <person name="Tanz S.K."/>
            <person name="Peng L."/>
            <person name="Fukao Y."/>
            <person name="Myouga F."/>
            <person name="Motohashi R."/>
            <person name="Shinozaki K."/>
            <person name="Small I."/>
            <person name="Shikanai T."/>
        </authorList>
    </citation>
    <scope>FUNCTION</scope>
    <scope>SUBCELLULAR LOCATION</scope>
    <scope>DISRUPTION PHENOTYPE</scope>
</reference>
<reference key="6">
    <citation type="journal article" date="2013" name="Proc. Natl. Acad. Sci. U.S.A.">
        <title>An RNA recognition motif-containing protein is required for plastid RNA editing in Arabidopsis and maize.</title>
        <authorList>
            <person name="Sun T."/>
            <person name="Germain A."/>
            <person name="Giloteaux L."/>
            <person name="Hammani K."/>
            <person name="Barkan A."/>
            <person name="Hanson M.R."/>
            <person name="Bentolila S."/>
        </authorList>
    </citation>
    <scope>INTERACTION WITH ORRM1</scope>
</reference>
<reference key="7">
    <citation type="journal article" date="2015" name="PLoS Genet.">
        <title>A zinc finger motif-containing protein is essential for chloroplast RNA editing.</title>
        <authorList>
            <person name="Sun T."/>
            <person name="Shi X."/>
            <person name="Friso G."/>
            <person name="Van Wijk K."/>
            <person name="Bentolila S."/>
            <person name="Hanson M.R."/>
        </authorList>
    </citation>
    <scope>INTERACTION WITH VAR3/OZ1</scope>
</reference>
<gene>
    <name type="primary">PCMP-H12</name>
    <name evidence="4" type="synonym">OTP82</name>
    <name type="ordered locus">At1g08070</name>
    <name type="ORF">T6D22.15</name>
</gene>
<protein>
    <recommendedName>
        <fullName evidence="5">Pentatricopeptide repeat-containing protein At1g08070, chloroplastic</fullName>
    </recommendedName>
    <alternativeName>
        <fullName evidence="4">Protein ORGANELLE TRANSCRIPT PROCESSING 82</fullName>
    </alternativeName>
</protein>
<name>PPR21_ARATH</name>
<evidence type="ECO:0000269" key="1">
    <source>
    </source>
</evidence>
<evidence type="ECO:0000269" key="2">
    <source>
    </source>
</evidence>
<evidence type="ECO:0000269" key="3">
    <source>
    </source>
</evidence>
<evidence type="ECO:0000303" key="4">
    <source>
    </source>
</evidence>
<evidence type="ECO:0000305" key="5"/>